<protein>
    <recommendedName>
        <fullName evidence="1">Ribosome-recycling factor</fullName>
        <shortName evidence="1">RRF</shortName>
    </recommendedName>
    <alternativeName>
        <fullName evidence="1">Ribosome-releasing factor</fullName>
    </alternativeName>
</protein>
<name>RRF_BRUC2</name>
<sequence length="186" mass="20664">MSDAFDINDLKRRMEGAVNALKHDLGGLRTGRASASLLEPITIEAYGSTMPINQVANISVPESRMLSVSVWDKSMVGAVERAIRDSGLGLNPITDGMTLRIPLPELNEQRRKELVKIAHQYAEQGRIAARHVRRDGMDQLKKLEKDSVISQDESRVLSEKVQKLTDDTIAEMDKIVAVKEGEIMQV</sequence>
<accession>A9M5H1</accession>
<gene>
    <name evidence="1" type="primary">frr</name>
    <name type="ordered locus">BCAN_A1177</name>
</gene>
<reference key="1">
    <citation type="submission" date="2007-10" db="EMBL/GenBank/DDBJ databases">
        <title>Brucella canis ATCC 23365 whole genome shotgun sequencing project.</title>
        <authorList>
            <person name="Setubal J.C."/>
            <person name="Bowns C."/>
            <person name="Boyle S."/>
            <person name="Crasta O.R."/>
            <person name="Czar M.J."/>
            <person name="Dharmanolla C."/>
            <person name="Gillespie J.J."/>
            <person name="Kenyon R.W."/>
            <person name="Lu J."/>
            <person name="Mane S."/>
            <person name="Mohapatra S."/>
            <person name="Nagrani S."/>
            <person name="Purkayastha A."/>
            <person name="Rajasimha H.K."/>
            <person name="Shallom J.M."/>
            <person name="Shallom S."/>
            <person name="Shukla M."/>
            <person name="Snyder E.E."/>
            <person name="Sobral B.W."/>
            <person name="Wattam A.R."/>
            <person name="Will R."/>
            <person name="Williams K."/>
            <person name="Yoo H."/>
            <person name="Bruce D."/>
            <person name="Detter C."/>
            <person name="Munk C."/>
            <person name="Brettin T.S."/>
        </authorList>
    </citation>
    <scope>NUCLEOTIDE SEQUENCE [LARGE SCALE GENOMIC DNA]</scope>
    <source>
        <strain>ATCC 23365 / NCTC 10854 / RM-666</strain>
    </source>
</reference>
<comment type="function">
    <text evidence="1">Responsible for the release of ribosomes from messenger RNA at the termination of protein biosynthesis. May increase the efficiency of translation by recycling ribosomes from one round of translation to another.</text>
</comment>
<comment type="subcellular location">
    <subcellularLocation>
        <location evidence="1">Cytoplasm</location>
    </subcellularLocation>
</comment>
<comment type="similarity">
    <text evidence="1">Belongs to the RRF family.</text>
</comment>
<proteinExistence type="inferred from homology"/>
<organism>
    <name type="scientific">Brucella canis (strain ATCC 23365 / NCTC 10854 / RM-666)</name>
    <dbReference type="NCBI Taxonomy" id="483179"/>
    <lineage>
        <taxon>Bacteria</taxon>
        <taxon>Pseudomonadati</taxon>
        <taxon>Pseudomonadota</taxon>
        <taxon>Alphaproteobacteria</taxon>
        <taxon>Hyphomicrobiales</taxon>
        <taxon>Brucellaceae</taxon>
        <taxon>Brucella/Ochrobactrum group</taxon>
        <taxon>Brucella</taxon>
    </lineage>
</organism>
<dbReference type="EMBL" id="CP000872">
    <property type="protein sequence ID" value="ABX62226.1"/>
    <property type="molecule type" value="Genomic_DNA"/>
</dbReference>
<dbReference type="RefSeq" id="WP_002964286.1">
    <property type="nucleotide sequence ID" value="NC_010103.1"/>
</dbReference>
<dbReference type="SMR" id="A9M5H1"/>
<dbReference type="GeneID" id="97533591"/>
<dbReference type="KEGG" id="bcs:BCAN_A1177"/>
<dbReference type="HOGENOM" id="CLU_073981_2_0_5"/>
<dbReference type="PhylomeDB" id="A9M5H1"/>
<dbReference type="Proteomes" id="UP000001385">
    <property type="component" value="Chromosome I"/>
</dbReference>
<dbReference type="GO" id="GO:0005829">
    <property type="term" value="C:cytosol"/>
    <property type="evidence" value="ECO:0007669"/>
    <property type="project" value="GOC"/>
</dbReference>
<dbReference type="GO" id="GO:0043023">
    <property type="term" value="F:ribosomal large subunit binding"/>
    <property type="evidence" value="ECO:0007669"/>
    <property type="project" value="TreeGrafter"/>
</dbReference>
<dbReference type="GO" id="GO:0002184">
    <property type="term" value="P:cytoplasmic translational termination"/>
    <property type="evidence" value="ECO:0007669"/>
    <property type="project" value="TreeGrafter"/>
</dbReference>
<dbReference type="CDD" id="cd00520">
    <property type="entry name" value="RRF"/>
    <property type="match status" value="1"/>
</dbReference>
<dbReference type="FunFam" id="1.10.132.20:FF:000001">
    <property type="entry name" value="Ribosome-recycling factor"/>
    <property type="match status" value="1"/>
</dbReference>
<dbReference type="FunFam" id="3.30.1360.40:FF:000001">
    <property type="entry name" value="Ribosome-recycling factor"/>
    <property type="match status" value="1"/>
</dbReference>
<dbReference type="Gene3D" id="3.30.1360.40">
    <property type="match status" value="1"/>
</dbReference>
<dbReference type="Gene3D" id="1.10.132.20">
    <property type="entry name" value="Ribosome-recycling factor"/>
    <property type="match status" value="1"/>
</dbReference>
<dbReference type="HAMAP" id="MF_00040">
    <property type="entry name" value="RRF"/>
    <property type="match status" value="1"/>
</dbReference>
<dbReference type="InterPro" id="IPR002661">
    <property type="entry name" value="Ribosome_recyc_fac"/>
</dbReference>
<dbReference type="InterPro" id="IPR023584">
    <property type="entry name" value="Ribosome_recyc_fac_dom"/>
</dbReference>
<dbReference type="InterPro" id="IPR036191">
    <property type="entry name" value="RRF_sf"/>
</dbReference>
<dbReference type="NCBIfam" id="TIGR00496">
    <property type="entry name" value="frr"/>
    <property type="match status" value="1"/>
</dbReference>
<dbReference type="PANTHER" id="PTHR20982:SF3">
    <property type="entry name" value="MITOCHONDRIAL RIBOSOME RECYCLING FACTOR PSEUDO 1"/>
    <property type="match status" value="1"/>
</dbReference>
<dbReference type="PANTHER" id="PTHR20982">
    <property type="entry name" value="RIBOSOME RECYCLING FACTOR"/>
    <property type="match status" value="1"/>
</dbReference>
<dbReference type="Pfam" id="PF01765">
    <property type="entry name" value="RRF"/>
    <property type="match status" value="1"/>
</dbReference>
<dbReference type="SUPFAM" id="SSF55194">
    <property type="entry name" value="Ribosome recycling factor, RRF"/>
    <property type="match status" value="1"/>
</dbReference>
<evidence type="ECO:0000255" key="1">
    <source>
        <dbReference type="HAMAP-Rule" id="MF_00040"/>
    </source>
</evidence>
<keyword id="KW-0963">Cytoplasm</keyword>
<keyword id="KW-0648">Protein biosynthesis</keyword>
<keyword id="KW-1185">Reference proteome</keyword>
<feature type="chain" id="PRO_1000074571" description="Ribosome-recycling factor">
    <location>
        <begin position="1"/>
        <end position="186"/>
    </location>
</feature>